<protein>
    <recommendedName>
        <fullName evidence="1">Large ribosomal subunit protein bL21</fullName>
    </recommendedName>
    <alternativeName>
        <fullName evidence="2">50S ribosomal protein L21</fullName>
    </alternativeName>
</protein>
<sequence length="103" mass="11538">MYAVIVSGGKQHRVKEGETLKLEKLEVETGGSVEFDRVLLVANGDDVKVGAPVVEGAKVTAEVVSHGRHDKVNIIKFRRRKHHMKRQGHRQWFTEVKITGIQG</sequence>
<dbReference type="EMBL" id="CP000514">
    <property type="protein sequence ID" value="ABM17951.1"/>
    <property type="molecule type" value="Genomic_DNA"/>
</dbReference>
<dbReference type="RefSeq" id="WP_011784373.1">
    <property type="nucleotide sequence ID" value="NC_008740.1"/>
</dbReference>
<dbReference type="SMR" id="A1TYY2"/>
<dbReference type="STRING" id="351348.Maqu_0855"/>
<dbReference type="GeneID" id="31820231"/>
<dbReference type="KEGG" id="maq:Maqu_0855"/>
<dbReference type="eggNOG" id="COG0261">
    <property type="taxonomic scope" value="Bacteria"/>
</dbReference>
<dbReference type="HOGENOM" id="CLU_061463_3_2_6"/>
<dbReference type="OrthoDB" id="9813334at2"/>
<dbReference type="Proteomes" id="UP000000998">
    <property type="component" value="Chromosome"/>
</dbReference>
<dbReference type="GO" id="GO:0005737">
    <property type="term" value="C:cytoplasm"/>
    <property type="evidence" value="ECO:0007669"/>
    <property type="project" value="UniProtKB-ARBA"/>
</dbReference>
<dbReference type="GO" id="GO:1990904">
    <property type="term" value="C:ribonucleoprotein complex"/>
    <property type="evidence" value="ECO:0007669"/>
    <property type="project" value="UniProtKB-KW"/>
</dbReference>
<dbReference type="GO" id="GO:0005840">
    <property type="term" value="C:ribosome"/>
    <property type="evidence" value="ECO:0007669"/>
    <property type="project" value="UniProtKB-KW"/>
</dbReference>
<dbReference type="GO" id="GO:0019843">
    <property type="term" value="F:rRNA binding"/>
    <property type="evidence" value="ECO:0007669"/>
    <property type="project" value="UniProtKB-UniRule"/>
</dbReference>
<dbReference type="GO" id="GO:0003735">
    <property type="term" value="F:structural constituent of ribosome"/>
    <property type="evidence" value="ECO:0007669"/>
    <property type="project" value="InterPro"/>
</dbReference>
<dbReference type="GO" id="GO:0006412">
    <property type="term" value="P:translation"/>
    <property type="evidence" value="ECO:0007669"/>
    <property type="project" value="UniProtKB-UniRule"/>
</dbReference>
<dbReference type="HAMAP" id="MF_01363">
    <property type="entry name" value="Ribosomal_bL21"/>
    <property type="match status" value="1"/>
</dbReference>
<dbReference type="InterPro" id="IPR028909">
    <property type="entry name" value="bL21-like"/>
</dbReference>
<dbReference type="InterPro" id="IPR036164">
    <property type="entry name" value="bL21-like_sf"/>
</dbReference>
<dbReference type="InterPro" id="IPR001787">
    <property type="entry name" value="Ribosomal_bL21"/>
</dbReference>
<dbReference type="InterPro" id="IPR018258">
    <property type="entry name" value="Ribosomal_bL21_CS"/>
</dbReference>
<dbReference type="NCBIfam" id="TIGR00061">
    <property type="entry name" value="L21"/>
    <property type="match status" value="1"/>
</dbReference>
<dbReference type="PANTHER" id="PTHR21349">
    <property type="entry name" value="50S RIBOSOMAL PROTEIN L21"/>
    <property type="match status" value="1"/>
</dbReference>
<dbReference type="PANTHER" id="PTHR21349:SF0">
    <property type="entry name" value="LARGE RIBOSOMAL SUBUNIT PROTEIN BL21M"/>
    <property type="match status" value="1"/>
</dbReference>
<dbReference type="Pfam" id="PF00829">
    <property type="entry name" value="Ribosomal_L21p"/>
    <property type="match status" value="1"/>
</dbReference>
<dbReference type="SUPFAM" id="SSF141091">
    <property type="entry name" value="L21p-like"/>
    <property type="match status" value="1"/>
</dbReference>
<dbReference type="PROSITE" id="PS01169">
    <property type="entry name" value="RIBOSOMAL_L21"/>
    <property type="match status" value="1"/>
</dbReference>
<gene>
    <name evidence="1" type="primary">rplU</name>
    <name type="ordered locus">Maqu_0855</name>
</gene>
<comment type="function">
    <text evidence="1">This protein binds to 23S rRNA in the presence of protein L20.</text>
</comment>
<comment type="subunit">
    <text evidence="1">Part of the 50S ribosomal subunit. Contacts protein L20.</text>
</comment>
<comment type="similarity">
    <text evidence="1">Belongs to the bacterial ribosomal protein bL21 family.</text>
</comment>
<reference key="1">
    <citation type="journal article" date="2011" name="Appl. Environ. Microbiol.">
        <title>Genomic potential of Marinobacter aquaeolei, a biogeochemical 'opportunitroph'.</title>
        <authorList>
            <person name="Singer E."/>
            <person name="Webb E.A."/>
            <person name="Nelson W.C."/>
            <person name="Heidelberg J.F."/>
            <person name="Ivanova N."/>
            <person name="Pati A."/>
            <person name="Edwards K.J."/>
        </authorList>
    </citation>
    <scope>NUCLEOTIDE SEQUENCE [LARGE SCALE GENOMIC DNA]</scope>
    <source>
        <strain>ATCC 700491 / DSM 11845 / VT8</strain>
    </source>
</reference>
<name>RL21_MARN8</name>
<evidence type="ECO:0000255" key="1">
    <source>
        <dbReference type="HAMAP-Rule" id="MF_01363"/>
    </source>
</evidence>
<evidence type="ECO:0000305" key="2"/>
<proteinExistence type="inferred from homology"/>
<keyword id="KW-0687">Ribonucleoprotein</keyword>
<keyword id="KW-0689">Ribosomal protein</keyword>
<keyword id="KW-0694">RNA-binding</keyword>
<keyword id="KW-0699">rRNA-binding</keyword>
<feature type="chain" id="PRO_1000067854" description="Large ribosomal subunit protein bL21">
    <location>
        <begin position="1"/>
        <end position="103"/>
    </location>
</feature>
<organism>
    <name type="scientific">Marinobacter nauticus (strain ATCC 700491 / DSM 11845 / VT8)</name>
    <name type="common">Marinobacter aquaeolei</name>
    <dbReference type="NCBI Taxonomy" id="351348"/>
    <lineage>
        <taxon>Bacteria</taxon>
        <taxon>Pseudomonadati</taxon>
        <taxon>Pseudomonadota</taxon>
        <taxon>Gammaproteobacteria</taxon>
        <taxon>Pseudomonadales</taxon>
        <taxon>Marinobacteraceae</taxon>
        <taxon>Marinobacter</taxon>
    </lineage>
</organism>
<accession>A1TYY2</accession>